<dbReference type="EC" id="3.5.4.16" evidence="1"/>
<dbReference type="EMBL" id="AE017340">
    <property type="protein sequence ID" value="AAV81332.1"/>
    <property type="molecule type" value="Genomic_DNA"/>
</dbReference>
<dbReference type="RefSeq" id="WP_011233750.1">
    <property type="nucleotide sequence ID" value="NC_006512.1"/>
</dbReference>
<dbReference type="SMR" id="Q5R041"/>
<dbReference type="STRING" id="283942.IL0489"/>
<dbReference type="GeneID" id="41335640"/>
<dbReference type="KEGG" id="ilo:IL0489"/>
<dbReference type="eggNOG" id="COG1469">
    <property type="taxonomic scope" value="Bacteria"/>
</dbReference>
<dbReference type="HOGENOM" id="CLU_062816_0_0_6"/>
<dbReference type="OrthoDB" id="239637at2"/>
<dbReference type="UniPathway" id="UPA00848">
    <property type="reaction ID" value="UER00151"/>
</dbReference>
<dbReference type="Proteomes" id="UP000001171">
    <property type="component" value="Chromosome"/>
</dbReference>
<dbReference type="GO" id="GO:0003934">
    <property type="term" value="F:GTP cyclohydrolase I activity"/>
    <property type="evidence" value="ECO:0007669"/>
    <property type="project" value="UniProtKB-UniRule"/>
</dbReference>
<dbReference type="GO" id="GO:0046654">
    <property type="term" value="P:tetrahydrofolate biosynthetic process"/>
    <property type="evidence" value="ECO:0007669"/>
    <property type="project" value="UniProtKB-UniRule"/>
</dbReference>
<dbReference type="Gene3D" id="3.10.270.10">
    <property type="entry name" value="Urate Oxidase"/>
    <property type="match status" value="1"/>
</dbReference>
<dbReference type="HAMAP" id="MF_01527_B">
    <property type="entry name" value="GTP_cyclohydrol_B"/>
    <property type="match status" value="1"/>
</dbReference>
<dbReference type="InterPro" id="IPR022838">
    <property type="entry name" value="GTP_cyclohydrolase_FolE2"/>
</dbReference>
<dbReference type="InterPro" id="IPR003801">
    <property type="entry name" value="GTP_cyclohydrolase_FolE2/MptA"/>
</dbReference>
<dbReference type="NCBIfam" id="NF010200">
    <property type="entry name" value="PRK13674.1-1"/>
    <property type="match status" value="1"/>
</dbReference>
<dbReference type="PANTHER" id="PTHR36445">
    <property type="entry name" value="GTP CYCLOHYDROLASE MPTA"/>
    <property type="match status" value="1"/>
</dbReference>
<dbReference type="PANTHER" id="PTHR36445:SF1">
    <property type="entry name" value="GTP CYCLOHYDROLASE MPTA"/>
    <property type="match status" value="1"/>
</dbReference>
<dbReference type="Pfam" id="PF02649">
    <property type="entry name" value="GCHY-1"/>
    <property type="match status" value="1"/>
</dbReference>
<evidence type="ECO:0000255" key="1">
    <source>
        <dbReference type="HAMAP-Rule" id="MF_01527"/>
    </source>
</evidence>
<organism>
    <name type="scientific">Idiomarina loihiensis (strain ATCC BAA-735 / DSM 15497 / L2-TR)</name>
    <dbReference type="NCBI Taxonomy" id="283942"/>
    <lineage>
        <taxon>Bacteria</taxon>
        <taxon>Pseudomonadati</taxon>
        <taxon>Pseudomonadota</taxon>
        <taxon>Gammaproteobacteria</taxon>
        <taxon>Alteromonadales</taxon>
        <taxon>Idiomarinaceae</taxon>
        <taxon>Idiomarina</taxon>
    </lineage>
</organism>
<comment type="function">
    <text evidence="1">Converts GTP to 7,8-dihydroneopterin triphosphate.</text>
</comment>
<comment type="catalytic activity">
    <reaction evidence="1">
        <text>GTP + H2O = 7,8-dihydroneopterin 3'-triphosphate + formate + H(+)</text>
        <dbReference type="Rhea" id="RHEA:17473"/>
        <dbReference type="ChEBI" id="CHEBI:15377"/>
        <dbReference type="ChEBI" id="CHEBI:15378"/>
        <dbReference type="ChEBI" id="CHEBI:15740"/>
        <dbReference type="ChEBI" id="CHEBI:37565"/>
        <dbReference type="ChEBI" id="CHEBI:58462"/>
        <dbReference type="EC" id="3.5.4.16"/>
    </reaction>
</comment>
<comment type="pathway">
    <text evidence="1">Cofactor biosynthesis; 7,8-dihydroneopterin triphosphate biosynthesis; 7,8-dihydroneopterin triphosphate from GTP: step 1/1.</text>
</comment>
<comment type="similarity">
    <text evidence="1">Belongs to the GTP cyclohydrolase IV family.</text>
</comment>
<keyword id="KW-0378">Hydrolase</keyword>
<keyword id="KW-1185">Reference proteome</keyword>
<gene>
    <name evidence="1" type="primary">folE2</name>
    <name type="ordered locus">IL0489</name>
</gene>
<reference key="1">
    <citation type="journal article" date="2004" name="Proc. Natl. Acad. Sci. U.S.A.">
        <title>Genome sequence of the deep-sea gamma-proteobacterium Idiomarina loihiensis reveals amino acid fermentation as a source of carbon and energy.</title>
        <authorList>
            <person name="Hou S."/>
            <person name="Saw J.H."/>
            <person name="Lee K.S."/>
            <person name="Freitas T.A."/>
            <person name="Belisle C."/>
            <person name="Kawarabayasi Y."/>
            <person name="Donachie S.P."/>
            <person name="Pikina A."/>
            <person name="Galperin M.Y."/>
            <person name="Koonin E.V."/>
            <person name="Makarova K.S."/>
            <person name="Omelchenko M.V."/>
            <person name="Sorokin A."/>
            <person name="Wolf Y.I."/>
            <person name="Li Q.X."/>
            <person name="Keum Y.S."/>
            <person name="Campbell S."/>
            <person name="Denery J."/>
            <person name="Aizawa S."/>
            <person name="Shibata S."/>
            <person name="Malahoff A."/>
            <person name="Alam M."/>
        </authorList>
    </citation>
    <scope>NUCLEOTIDE SEQUENCE [LARGE SCALE GENOMIC DNA]</scope>
    <source>
        <strain>ATCC BAA-735 / DSM 15497 / L2-TR</strain>
    </source>
</reference>
<proteinExistence type="inferred from homology"/>
<protein>
    <recommendedName>
        <fullName evidence="1">GTP cyclohydrolase FolE2</fullName>
        <ecNumber evidence="1">3.5.4.16</ecNumber>
    </recommendedName>
</protein>
<name>GCH4_IDILO</name>
<accession>Q5R041</accession>
<feature type="chain" id="PRO_0000147711" description="GTP cyclohydrolase FolE2">
    <location>
        <begin position="1"/>
        <end position="308"/>
    </location>
</feature>
<feature type="site" description="May be catalytically important" evidence="1">
    <location>
        <position position="155"/>
    </location>
</feature>
<sequence length="308" mass="34233">MPTVMPDVANQTQAQTEGALDWVGMSNIEVPLMVAAAGVPERPVAAKVEAFVNLKNPKTKGIHMSRLYLLLDKMSTEGELSHDTLKQLLNDFIESHKDISDQAFIKFDFDYHLRRKSLISKKQGWKAYPVSLTGRYDAGQLKLELSVDVPYSSTCPCSAALARQLIQDAFSEKFAGQEQVDASIMHEWLGSTEGIVATPHSQRSVAEVKVALSDSVNDFPIVELIDAIEGALKTPVQAAVKREDEQEFARLNGQNLMFCEDASRRLQHQLNQMSNFRDFWLRVNHYESLHAHDAVSVTTKGVPGGYSA</sequence>